<dbReference type="EMBL" id="EF471314">
    <property type="protein sequence ID" value="ABO71783.1"/>
    <property type="molecule type" value="mRNA"/>
</dbReference>
<dbReference type="SMR" id="A4URH3"/>
<dbReference type="Allergome" id="3759">
    <property type="allergen name" value="Eri s 1"/>
</dbReference>
<dbReference type="Allergome" id="4086">
    <property type="allergen name" value="Eri s 1.0101"/>
</dbReference>
<dbReference type="OrthoDB" id="128924at2759"/>
<dbReference type="GO" id="GO:0042803">
    <property type="term" value="F:protein homodimerization activity"/>
    <property type="evidence" value="ECO:0000250"/>
    <property type="project" value="UniProtKB"/>
</dbReference>
<dbReference type="GO" id="GO:0006937">
    <property type="term" value="P:regulation of muscle contraction"/>
    <property type="evidence" value="ECO:0000250"/>
    <property type="project" value="UniProtKB"/>
</dbReference>
<dbReference type="FunFam" id="1.20.5.170:FF:000005">
    <property type="entry name" value="Tropomyosin alpha-1 chain"/>
    <property type="match status" value="1"/>
</dbReference>
<dbReference type="FunFam" id="1.20.5.170:FF:000001">
    <property type="entry name" value="Tropomyosin alpha-1 chain isoform 1"/>
    <property type="match status" value="1"/>
</dbReference>
<dbReference type="FunFam" id="1.20.5.340:FF:000001">
    <property type="entry name" value="Tropomyosin alpha-1 chain isoform 2"/>
    <property type="match status" value="1"/>
</dbReference>
<dbReference type="Gene3D" id="1.20.5.170">
    <property type="match status" value="2"/>
</dbReference>
<dbReference type="Gene3D" id="1.20.5.340">
    <property type="match status" value="1"/>
</dbReference>
<dbReference type="InterPro" id="IPR000533">
    <property type="entry name" value="Tropomyosin"/>
</dbReference>
<dbReference type="PANTHER" id="PTHR19269">
    <property type="entry name" value="TROPOMYOSIN"/>
    <property type="match status" value="1"/>
</dbReference>
<dbReference type="Pfam" id="PF00261">
    <property type="entry name" value="Tropomyosin"/>
    <property type="match status" value="1"/>
</dbReference>
<dbReference type="PRINTS" id="PR00194">
    <property type="entry name" value="TROPOMYOSIN"/>
</dbReference>
<dbReference type="SUPFAM" id="SSF57997">
    <property type="entry name" value="Tropomyosin"/>
    <property type="match status" value="1"/>
</dbReference>
<dbReference type="PROSITE" id="PS00326">
    <property type="entry name" value="TROPOMYOSIN"/>
    <property type="match status" value="1"/>
</dbReference>
<protein>
    <recommendedName>
        <fullName evidence="8 9">Tropomyosin</fullName>
    </recommendedName>
    <allergenName evidence="10">Eri s 1.0101</allergenName>
</protein>
<organism evidence="11">
    <name type="scientific">Eriocheir sinensis</name>
    <name type="common">Chinese mitten crab</name>
    <dbReference type="NCBI Taxonomy" id="95602"/>
    <lineage>
        <taxon>Eukaryota</taxon>
        <taxon>Metazoa</taxon>
        <taxon>Ecdysozoa</taxon>
        <taxon>Arthropoda</taxon>
        <taxon>Crustacea</taxon>
        <taxon>Multicrustacea</taxon>
        <taxon>Malacostraca</taxon>
        <taxon>Eumalacostraca</taxon>
        <taxon>Eucarida</taxon>
        <taxon>Decapoda</taxon>
        <taxon>Pleocyemata</taxon>
        <taxon>Brachyura</taxon>
        <taxon>Eubrachyura</taxon>
        <taxon>Grapsoidea</taxon>
        <taxon>Varunidae</taxon>
        <taxon>Eriocheir</taxon>
    </lineage>
</organism>
<comment type="function">
    <text evidence="2">Tropomyosin, in association with the troponin complex, plays a central role in the calcium dependent regulation of muscle contraction.</text>
</comment>
<comment type="subunit">
    <text evidence="1">Homodimer.</text>
</comment>
<comment type="tissue specificity">
    <text evidence="6 7">Muscle (at protein level) (PubMed:20564455, Ref.1). Expressed in leg and chest protection muscle (at protein level) (PubMed:20564455). Expressed in claw muscle (Ref.1).</text>
</comment>
<comment type="domain">
    <text evidence="10">The molecule is in a coiled coil structure that is formed by 2 polypeptide chains. The sequence exhibits a prominent seven-residues periodicity.</text>
</comment>
<comment type="allergen">
    <text evidence="6 7">Causes an allergic reaction in human. Binds to IgE (PubMed:20564455, Ref.1). Binds to IgE in 100% of the 21 patients tested allergic to crustaceans (Ref.1). Allergenicity of this protein is reduced by pepsin or chymotrypsin, and most effectively by trypsin, digestion in vitro (PubMed:20564455).</text>
</comment>
<comment type="similarity">
    <text evidence="4 10">Belongs to the tropomyosin family.</text>
</comment>
<keyword id="KW-0020">Allergen</keyword>
<keyword id="KW-0175">Coiled coil</keyword>
<keyword id="KW-0514">Muscle protein</keyword>
<keyword id="KW-0677">Repeat</keyword>
<reference evidence="11" key="1">
    <citation type="journal article" date="2008" name="Food Chem.">
        <title>Identification and characterisation of the major allergen of Chinese mitten crab (Eriocheir sinensis).</title>
        <authorList>
            <person name="Liang Y.-L."/>
            <person name="Cao M.-J."/>
            <person name="Su W.-J."/>
            <person name="Zhang L.-J."/>
            <person name="Huang Y.-Y."/>
            <person name="Liu G.-M."/>
        </authorList>
    </citation>
    <scope>NUCLEOTIDE SEQUENCE [MRNA]</scope>
    <scope>TISSUE SPECIFICITY</scope>
    <scope>ALLERGEN</scope>
    <source>
        <tissue evidence="9">Muscle</tissue>
    </source>
</reference>
<reference key="2">
    <citation type="journal article" date="2010" name="J. Sci. Food Agric.">
        <title>Comparative study of in vitro digestibility of major allergen tropomyosin and other food proteins of Chinese mitten crab (Eriocheir sinensis).</title>
        <authorList>
            <person name="Liu G.M."/>
            <person name="Cao M.J."/>
            <person name="Huang Y.Y."/>
            <person name="Cai Q.F."/>
            <person name="Weng W.Y."/>
            <person name="Su W.J."/>
        </authorList>
    </citation>
    <scope>TISSUE SPECIFICITY</scope>
    <scope>ALLERGEN</scope>
</reference>
<accession>A4URH3</accession>
<sequence>MDAIKKKMQAMKLEKDNAMDRADTLEQQNKEANNRAEKTEEEIRATQKKMQQVENELDQAQEQLSAANTKLDEKEKALQNAEGEVAALNRRIQLLEEDLERSEERLNTATTKLAEASQAADESERMRKVLENRSLSDEERMDALENQLKEARFLAEEADRKYDEVARKLAMVEADLERAEERAESGESKIVELEEELRVVGNNLKSLEVSEEKANQREETYKEQIKTLANKLKAAEARAEFAERSVQKLQKEVDRLEDELVNEKEKYKSITDELDQTFSELSGY</sequence>
<name>TPM_ERISI</name>
<evidence type="ECO:0000250" key="1">
    <source>
        <dbReference type="UniProtKB" id="A2V735"/>
    </source>
</evidence>
<evidence type="ECO:0000250" key="2">
    <source>
        <dbReference type="UniProtKB" id="Q22866"/>
    </source>
</evidence>
<evidence type="ECO:0000255" key="3"/>
<evidence type="ECO:0000255" key="4">
    <source>
        <dbReference type="RuleBase" id="RU004515"/>
    </source>
</evidence>
<evidence type="ECO:0000256" key="5">
    <source>
        <dbReference type="SAM" id="MobiDB-lite"/>
    </source>
</evidence>
<evidence type="ECO:0000269" key="6">
    <source>
    </source>
</evidence>
<evidence type="ECO:0000269" key="7">
    <source ref="1"/>
</evidence>
<evidence type="ECO:0000303" key="8">
    <source>
    </source>
</evidence>
<evidence type="ECO:0000303" key="9">
    <source ref="1"/>
</evidence>
<evidence type="ECO:0000305" key="10"/>
<evidence type="ECO:0000312" key="11">
    <source>
        <dbReference type="EMBL" id="ABO71783.1"/>
    </source>
</evidence>
<feature type="chain" id="PRO_0000447993" description="Tropomyosin">
    <location>
        <begin position="1"/>
        <end position="284"/>
    </location>
</feature>
<feature type="region of interest" description="Disordered" evidence="5">
    <location>
        <begin position="1"/>
        <end position="54"/>
    </location>
</feature>
<feature type="coiled-coil region" evidence="3">
    <location>
        <begin position="1"/>
        <end position="273"/>
    </location>
</feature>
<feature type="compositionally biased region" description="Basic and acidic residues" evidence="5">
    <location>
        <begin position="12"/>
        <end position="45"/>
    </location>
</feature>
<proteinExistence type="evidence at protein level"/>